<dbReference type="EMBL" id="DQ641254">
    <property type="protein sequence ID" value="ABG34539.1"/>
    <property type="molecule type" value="mRNA"/>
</dbReference>
<dbReference type="SMR" id="Q156A1"/>
<dbReference type="BioMuta" id="HGNC:32925"/>
<dbReference type="MassIVE" id="Q156A1"/>
<dbReference type="PeptideAtlas" id="Q156A1"/>
<dbReference type="AGR" id="HGNC:32925"/>
<dbReference type="GeneCards" id="ATXN8"/>
<dbReference type="GeneReviews" id="ATXN8"/>
<dbReference type="HGNC" id="HGNC:32925">
    <property type="gene designation" value="ATXN8"/>
</dbReference>
<dbReference type="MalaCards" id="ATXN8"/>
<dbReference type="MIM" id="608768">
    <property type="type" value="phenotype"/>
</dbReference>
<dbReference type="MIM" id="613289">
    <property type="type" value="gene"/>
</dbReference>
<dbReference type="neXtProt" id="NX_Q156A1"/>
<dbReference type="Orphanet" id="98760">
    <property type="disease" value="Spinocerebellar ataxia type 8"/>
</dbReference>
<dbReference type="InParanoid" id="Q156A1"/>
<dbReference type="PAN-GO" id="Q156A1">
    <property type="GO annotations" value="0 GO annotations based on evolutionary models"/>
</dbReference>
<dbReference type="Pharos" id="Q156A1">
    <property type="development level" value="Tdark"/>
</dbReference>
<dbReference type="PRO" id="PR:Q156A1"/>
<dbReference type="Proteomes" id="UP000005640">
    <property type="component" value="Unplaced"/>
</dbReference>
<dbReference type="RNAct" id="Q156A1">
    <property type="molecule type" value="protein"/>
</dbReference>
<dbReference type="GO" id="GO:0005634">
    <property type="term" value="C:nucleus"/>
    <property type="evidence" value="ECO:0007669"/>
    <property type="project" value="UniProtKB-SubCell"/>
</dbReference>
<keyword id="KW-0523">Neurodegeneration</keyword>
<keyword id="KW-0539">Nucleus</keyword>
<keyword id="KW-1185">Reference proteome</keyword>
<keyword id="KW-0950">Spinocerebellar ataxia</keyword>
<keyword id="KW-0818">Triplet repeat expansion</keyword>
<name>ATX8_HUMAN</name>
<gene>
    <name type="primary">ATXN8</name>
</gene>
<proteinExistence type="evidence at protein level"/>
<evidence type="ECO:0000269" key="1">
    <source>
    </source>
</evidence>
<comment type="subcellular location">
    <subcellularLocation>
        <location evidence="1">Nucleus</location>
    </subcellularLocation>
    <text>Present in SCA8-specific 1C2-positive intranuclear inclusions.</text>
</comment>
<comment type="tissue specificity">
    <text evidence="1">Specifically found in brains from SCA8 patients (at protein level).</text>
</comment>
<comment type="polymorphism">
    <text>The length of the poly-Gln expansion is variable and may contain one or more interruptions that introduce arginines into the polyglutamine repeat tract.</text>
</comment>
<comment type="disease" evidence="1">
    <disease id="DI-01072">
        <name>Spinocerebellar ataxia 8</name>
        <acronym>SCA8</acronym>
        <description>Spinocerebellar ataxia is a clinically and genetically heterogeneous group of cerebellar disorders. Patients show progressive incoordination of gait and often poor coordination of hands, speech and eye movements, due to degeneration of the cerebellum with variable involvement of the brainstem and spinal cord. SCA8 is an autosomal dominant cerebellar ataxia (ADCA). It is caused by expansion of a CAG repeat in ATXN8, which is translated into a nearly pure polyglutamine protein which forms 1C2-positive inclusions in Purkinje cells and other neurons.</description>
        <dbReference type="MIM" id="608768"/>
    </disease>
    <text>The disease is caused by variants affecting the gene represented in this entry.</text>
</comment>
<comment type="miscellaneous">
    <text>It is unknown whether this protein exists in non-SCA8 individuals.</text>
</comment>
<organism>
    <name type="scientific">Homo sapiens</name>
    <name type="common">Human</name>
    <dbReference type="NCBI Taxonomy" id="9606"/>
    <lineage>
        <taxon>Eukaryota</taxon>
        <taxon>Metazoa</taxon>
        <taxon>Chordata</taxon>
        <taxon>Craniata</taxon>
        <taxon>Vertebrata</taxon>
        <taxon>Euteleostomi</taxon>
        <taxon>Mammalia</taxon>
        <taxon>Eutheria</taxon>
        <taxon>Euarchontoglires</taxon>
        <taxon>Primates</taxon>
        <taxon>Haplorrhini</taxon>
        <taxon>Catarrhini</taxon>
        <taxon>Hominidae</taxon>
        <taxon>Homo</taxon>
    </lineage>
</organism>
<accession>Q156A1</accession>
<sequence>MQQQQQQQQQQQQQQQQQQQQQQQQQQQQQQQQQQQQQQQQQQQQQQQQQQQQQQQQQQQQQQQQQQQQQQQQQQQQQQQ</sequence>
<protein>
    <recommendedName>
        <fullName>Ataxin-8</fullName>
    </recommendedName>
    <alternativeName>
        <fullName>Protein 1C2</fullName>
    </alternativeName>
</protein>
<reference key="1">
    <citation type="journal article" date="2006" name="Nat. Genet.">
        <title>Bidirectional expression of CUG and CAG expansion transcripts and intranuclear polyglutamine inclusions in spinocerebellar ataxia type 8.</title>
        <authorList>
            <person name="Moseley M.L."/>
            <person name="Zu T."/>
            <person name="Ikeda Y."/>
            <person name="Gao W."/>
            <person name="Mosemiller A.K."/>
            <person name="Daughters R.S."/>
            <person name="Chen G."/>
            <person name="Weatherspoon M.R."/>
            <person name="Clark H.B."/>
            <person name="Ebner T.J."/>
            <person name="Day J.W."/>
            <person name="Ranum L.P.W."/>
        </authorList>
    </citation>
    <scope>NUCLEOTIDE SEQUENCE [MRNA]</scope>
    <scope>SUBCELLULAR LOCATION</scope>
    <scope>TISSUE SPECIFICITY</scope>
    <scope>INVOLVEMENT IN SCA8</scope>
    <scope>POLYMORPHISM</scope>
</reference>
<feature type="chain" id="PRO_0000271118" description="Ataxin-8">
    <location>
        <begin position="1"/>
        <end position="80"/>
    </location>
</feature>